<organism>
    <name type="scientific">Phenylobacterium zucineum (strain HLK1)</name>
    <dbReference type="NCBI Taxonomy" id="450851"/>
    <lineage>
        <taxon>Bacteria</taxon>
        <taxon>Pseudomonadati</taxon>
        <taxon>Pseudomonadota</taxon>
        <taxon>Alphaproteobacteria</taxon>
        <taxon>Caulobacterales</taxon>
        <taxon>Caulobacteraceae</taxon>
        <taxon>Phenylobacterium</taxon>
    </lineage>
</organism>
<gene>
    <name evidence="1" type="primary">argS</name>
    <name type="ordered locus">PHZ_c2895</name>
</gene>
<proteinExistence type="inferred from homology"/>
<evidence type="ECO:0000255" key="1">
    <source>
        <dbReference type="HAMAP-Rule" id="MF_00123"/>
    </source>
</evidence>
<name>SYR_PHEZH</name>
<feature type="chain" id="PRO_1000095388" description="Arginine--tRNA ligase">
    <location>
        <begin position="1"/>
        <end position="593"/>
    </location>
</feature>
<feature type="short sequence motif" description="'HIGH' region">
    <location>
        <begin position="123"/>
        <end position="133"/>
    </location>
</feature>
<comment type="catalytic activity">
    <reaction evidence="1">
        <text>tRNA(Arg) + L-arginine + ATP = L-arginyl-tRNA(Arg) + AMP + diphosphate</text>
        <dbReference type="Rhea" id="RHEA:20301"/>
        <dbReference type="Rhea" id="RHEA-COMP:9658"/>
        <dbReference type="Rhea" id="RHEA-COMP:9673"/>
        <dbReference type="ChEBI" id="CHEBI:30616"/>
        <dbReference type="ChEBI" id="CHEBI:32682"/>
        <dbReference type="ChEBI" id="CHEBI:33019"/>
        <dbReference type="ChEBI" id="CHEBI:78442"/>
        <dbReference type="ChEBI" id="CHEBI:78513"/>
        <dbReference type="ChEBI" id="CHEBI:456215"/>
        <dbReference type="EC" id="6.1.1.19"/>
    </reaction>
</comment>
<comment type="subunit">
    <text evidence="1">Monomer.</text>
</comment>
<comment type="subcellular location">
    <subcellularLocation>
        <location evidence="1">Cytoplasm</location>
    </subcellularLocation>
</comment>
<comment type="similarity">
    <text evidence="1">Belongs to the class-I aminoacyl-tRNA synthetase family.</text>
</comment>
<keyword id="KW-0030">Aminoacyl-tRNA synthetase</keyword>
<keyword id="KW-0067">ATP-binding</keyword>
<keyword id="KW-0963">Cytoplasm</keyword>
<keyword id="KW-0436">Ligase</keyword>
<keyword id="KW-0547">Nucleotide-binding</keyword>
<keyword id="KW-0648">Protein biosynthesis</keyword>
<keyword id="KW-1185">Reference proteome</keyword>
<sequence length="593" mass="64241">MSDLKTALGEAVEAAFAAEGVPAELARVTASDRPDLADFQSNGALAAAKRVGKNPREIATAVAGRLQGDPRLASVEIAGPGFLNLKVADAALAARADAIAADPRAGAGTVPAPRRVIVDYGGPNVAKPMHVGHLRASIIGESVKRLYRFRGDTVIGDAHFGDWGYQMGLLIGAVCDEDAEIRALVDQLNASGDPNGEIPAAFERVTLADLDRLYPLAAAKGKEDPAYRDRARKLTADLQAHKPGCYLLWRRFRDVTQVALERDFHALGVDFDWWKGESDVDHLIQPMVAELADKGLLVDDQGARIVRVAREGDKRELPPLLVVSSEGSAMYGTTDLATILDRKREFDPQLVIYCVDQRQADHFEIVFRAAYLAGYAEEGQLEHIGFGTMNGTDGKPFKTREGGVLKLADLIEMTRSKARERLHEAGLGEDLPAEEFEDIAGKVAVAALKFADLSNFRGTSYVFDLDRFTSFEGKTGPYLLYQAVRVKSLLRKAEAEGAQAGPVTVAEPAERDLVLTLDAFETALQEAYDKKAPNALAEHAYRLSQAFSKFYAACPILAAPPPVRGSRLTLAQATLRQLELALDILGIAVPERM</sequence>
<dbReference type="EC" id="6.1.1.19" evidence="1"/>
<dbReference type="EMBL" id="CP000747">
    <property type="protein sequence ID" value="ACG79304.1"/>
    <property type="molecule type" value="Genomic_DNA"/>
</dbReference>
<dbReference type="RefSeq" id="WP_012523442.1">
    <property type="nucleotide sequence ID" value="NC_011144.1"/>
</dbReference>
<dbReference type="SMR" id="B4R8T9"/>
<dbReference type="STRING" id="450851.PHZ_c2895"/>
<dbReference type="KEGG" id="pzu:PHZ_c2895"/>
<dbReference type="eggNOG" id="COG0018">
    <property type="taxonomic scope" value="Bacteria"/>
</dbReference>
<dbReference type="HOGENOM" id="CLU_006406_5_1_5"/>
<dbReference type="OrthoDB" id="9803211at2"/>
<dbReference type="Proteomes" id="UP000001868">
    <property type="component" value="Chromosome"/>
</dbReference>
<dbReference type="GO" id="GO:0005737">
    <property type="term" value="C:cytoplasm"/>
    <property type="evidence" value="ECO:0007669"/>
    <property type="project" value="UniProtKB-SubCell"/>
</dbReference>
<dbReference type="GO" id="GO:0004814">
    <property type="term" value="F:arginine-tRNA ligase activity"/>
    <property type="evidence" value="ECO:0007669"/>
    <property type="project" value="UniProtKB-UniRule"/>
</dbReference>
<dbReference type="GO" id="GO:0005524">
    <property type="term" value="F:ATP binding"/>
    <property type="evidence" value="ECO:0007669"/>
    <property type="project" value="UniProtKB-UniRule"/>
</dbReference>
<dbReference type="GO" id="GO:0006420">
    <property type="term" value="P:arginyl-tRNA aminoacylation"/>
    <property type="evidence" value="ECO:0007669"/>
    <property type="project" value="UniProtKB-UniRule"/>
</dbReference>
<dbReference type="CDD" id="cd00671">
    <property type="entry name" value="ArgRS_core"/>
    <property type="match status" value="1"/>
</dbReference>
<dbReference type="Gene3D" id="3.30.1360.70">
    <property type="entry name" value="Arginyl tRNA synthetase N-terminal domain"/>
    <property type="match status" value="1"/>
</dbReference>
<dbReference type="Gene3D" id="3.40.50.620">
    <property type="entry name" value="HUPs"/>
    <property type="match status" value="1"/>
</dbReference>
<dbReference type="Gene3D" id="1.10.730.10">
    <property type="entry name" value="Isoleucyl-tRNA Synthetase, Domain 1"/>
    <property type="match status" value="1"/>
</dbReference>
<dbReference type="HAMAP" id="MF_00123">
    <property type="entry name" value="Arg_tRNA_synth"/>
    <property type="match status" value="1"/>
</dbReference>
<dbReference type="InterPro" id="IPR001412">
    <property type="entry name" value="aa-tRNA-synth_I_CS"/>
</dbReference>
<dbReference type="InterPro" id="IPR001278">
    <property type="entry name" value="Arg-tRNA-ligase"/>
</dbReference>
<dbReference type="InterPro" id="IPR005148">
    <property type="entry name" value="Arg-tRNA-synth_N"/>
</dbReference>
<dbReference type="InterPro" id="IPR036695">
    <property type="entry name" value="Arg-tRNA-synth_N_sf"/>
</dbReference>
<dbReference type="InterPro" id="IPR035684">
    <property type="entry name" value="ArgRS_core"/>
</dbReference>
<dbReference type="InterPro" id="IPR008909">
    <property type="entry name" value="DALR_anticod-bd"/>
</dbReference>
<dbReference type="InterPro" id="IPR014729">
    <property type="entry name" value="Rossmann-like_a/b/a_fold"/>
</dbReference>
<dbReference type="InterPro" id="IPR009080">
    <property type="entry name" value="tRNAsynth_Ia_anticodon-bd"/>
</dbReference>
<dbReference type="NCBIfam" id="TIGR00456">
    <property type="entry name" value="argS"/>
    <property type="match status" value="1"/>
</dbReference>
<dbReference type="PANTHER" id="PTHR11956:SF5">
    <property type="entry name" value="ARGININE--TRNA LIGASE, CYTOPLASMIC"/>
    <property type="match status" value="1"/>
</dbReference>
<dbReference type="PANTHER" id="PTHR11956">
    <property type="entry name" value="ARGINYL-TRNA SYNTHETASE"/>
    <property type="match status" value="1"/>
</dbReference>
<dbReference type="Pfam" id="PF03485">
    <property type="entry name" value="Arg_tRNA_synt_N"/>
    <property type="match status" value="1"/>
</dbReference>
<dbReference type="Pfam" id="PF05746">
    <property type="entry name" value="DALR_1"/>
    <property type="match status" value="1"/>
</dbReference>
<dbReference type="Pfam" id="PF00750">
    <property type="entry name" value="tRNA-synt_1d"/>
    <property type="match status" value="1"/>
</dbReference>
<dbReference type="PRINTS" id="PR01038">
    <property type="entry name" value="TRNASYNTHARG"/>
</dbReference>
<dbReference type="SMART" id="SM01016">
    <property type="entry name" value="Arg_tRNA_synt_N"/>
    <property type="match status" value="1"/>
</dbReference>
<dbReference type="SMART" id="SM00836">
    <property type="entry name" value="DALR_1"/>
    <property type="match status" value="1"/>
</dbReference>
<dbReference type="SUPFAM" id="SSF47323">
    <property type="entry name" value="Anticodon-binding domain of a subclass of class I aminoacyl-tRNA synthetases"/>
    <property type="match status" value="1"/>
</dbReference>
<dbReference type="SUPFAM" id="SSF55190">
    <property type="entry name" value="Arginyl-tRNA synthetase (ArgRS), N-terminal 'additional' domain"/>
    <property type="match status" value="1"/>
</dbReference>
<dbReference type="SUPFAM" id="SSF52374">
    <property type="entry name" value="Nucleotidylyl transferase"/>
    <property type="match status" value="1"/>
</dbReference>
<dbReference type="PROSITE" id="PS00178">
    <property type="entry name" value="AA_TRNA_LIGASE_I"/>
    <property type="match status" value="1"/>
</dbReference>
<protein>
    <recommendedName>
        <fullName evidence="1">Arginine--tRNA ligase</fullName>
        <ecNumber evidence="1">6.1.1.19</ecNumber>
    </recommendedName>
    <alternativeName>
        <fullName evidence="1">Arginyl-tRNA synthetase</fullName>
        <shortName evidence="1">ArgRS</shortName>
    </alternativeName>
</protein>
<accession>B4R8T9</accession>
<reference key="1">
    <citation type="journal article" date="2008" name="BMC Genomics">
        <title>Complete genome of Phenylobacterium zucineum - a novel facultative intracellular bacterium isolated from human erythroleukemia cell line K562.</title>
        <authorList>
            <person name="Luo Y."/>
            <person name="Xu X."/>
            <person name="Ding Z."/>
            <person name="Liu Z."/>
            <person name="Zhang B."/>
            <person name="Yan Z."/>
            <person name="Sun J."/>
            <person name="Hu S."/>
            <person name="Hu X."/>
        </authorList>
    </citation>
    <scope>NUCLEOTIDE SEQUENCE [LARGE SCALE GENOMIC DNA]</scope>
    <source>
        <strain>HLK1</strain>
    </source>
</reference>